<dbReference type="EC" id="1.1.1.290" evidence="1"/>
<dbReference type="EMBL" id="CP001616">
    <property type="protein sequence ID" value="ACQ93183.1"/>
    <property type="molecule type" value="Genomic_DNA"/>
</dbReference>
<dbReference type="RefSeq" id="WP_015878654.1">
    <property type="nucleotide sequence ID" value="NC_012691.1"/>
</dbReference>
<dbReference type="SMR" id="C4LF16"/>
<dbReference type="STRING" id="595494.Tola_1572"/>
<dbReference type="KEGG" id="tau:Tola_1572"/>
<dbReference type="eggNOG" id="COG0111">
    <property type="taxonomic scope" value="Bacteria"/>
</dbReference>
<dbReference type="HOGENOM" id="CLU_019796_4_0_6"/>
<dbReference type="OrthoDB" id="9770208at2"/>
<dbReference type="UniPathway" id="UPA00244">
    <property type="reaction ID" value="UER00310"/>
</dbReference>
<dbReference type="Proteomes" id="UP000009073">
    <property type="component" value="Chromosome"/>
</dbReference>
<dbReference type="GO" id="GO:0005737">
    <property type="term" value="C:cytoplasm"/>
    <property type="evidence" value="ECO:0007669"/>
    <property type="project" value="UniProtKB-SubCell"/>
</dbReference>
<dbReference type="GO" id="GO:0033711">
    <property type="term" value="F:4-phosphoerythronate dehydrogenase activity"/>
    <property type="evidence" value="ECO:0007669"/>
    <property type="project" value="UniProtKB-EC"/>
</dbReference>
<dbReference type="GO" id="GO:0051287">
    <property type="term" value="F:NAD binding"/>
    <property type="evidence" value="ECO:0007669"/>
    <property type="project" value="InterPro"/>
</dbReference>
<dbReference type="GO" id="GO:0046983">
    <property type="term" value="F:protein dimerization activity"/>
    <property type="evidence" value="ECO:0007669"/>
    <property type="project" value="InterPro"/>
</dbReference>
<dbReference type="GO" id="GO:0008615">
    <property type="term" value="P:pyridoxine biosynthetic process"/>
    <property type="evidence" value="ECO:0007669"/>
    <property type="project" value="UniProtKB-UniRule"/>
</dbReference>
<dbReference type="CDD" id="cd12158">
    <property type="entry name" value="ErythrP_dh"/>
    <property type="match status" value="1"/>
</dbReference>
<dbReference type="Gene3D" id="3.30.1370.170">
    <property type="match status" value="1"/>
</dbReference>
<dbReference type="Gene3D" id="3.40.50.720">
    <property type="entry name" value="NAD(P)-binding Rossmann-like Domain"/>
    <property type="match status" value="2"/>
</dbReference>
<dbReference type="HAMAP" id="MF_01825">
    <property type="entry name" value="PdxB"/>
    <property type="match status" value="1"/>
</dbReference>
<dbReference type="InterPro" id="IPR050223">
    <property type="entry name" value="D-isomer_2-hydroxyacid_DH"/>
</dbReference>
<dbReference type="InterPro" id="IPR006139">
    <property type="entry name" value="D-isomer_2_OHA_DH_cat_dom"/>
</dbReference>
<dbReference type="InterPro" id="IPR006140">
    <property type="entry name" value="D-isomer_DH_NAD-bd"/>
</dbReference>
<dbReference type="InterPro" id="IPR020921">
    <property type="entry name" value="Erythronate-4-P_DHase"/>
</dbReference>
<dbReference type="InterPro" id="IPR024531">
    <property type="entry name" value="Erythronate-4-P_DHase_dimer"/>
</dbReference>
<dbReference type="InterPro" id="IPR036291">
    <property type="entry name" value="NAD(P)-bd_dom_sf"/>
</dbReference>
<dbReference type="InterPro" id="IPR038251">
    <property type="entry name" value="PdxB_dimer_sf"/>
</dbReference>
<dbReference type="PANTHER" id="PTHR10996">
    <property type="entry name" value="2-HYDROXYACID DEHYDROGENASE-RELATED"/>
    <property type="match status" value="1"/>
</dbReference>
<dbReference type="PANTHER" id="PTHR10996:SF282">
    <property type="entry name" value="D-3-PHOSPHOGLYCERATE DEHYDROGENASE 1-RELATED"/>
    <property type="match status" value="1"/>
</dbReference>
<dbReference type="Pfam" id="PF00389">
    <property type="entry name" value="2-Hacid_dh"/>
    <property type="match status" value="1"/>
</dbReference>
<dbReference type="Pfam" id="PF02826">
    <property type="entry name" value="2-Hacid_dh_C"/>
    <property type="match status" value="1"/>
</dbReference>
<dbReference type="Pfam" id="PF11890">
    <property type="entry name" value="DUF3410"/>
    <property type="match status" value="1"/>
</dbReference>
<dbReference type="SUPFAM" id="SSF52283">
    <property type="entry name" value="Formate/glycerate dehydrogenase catalytic domain-like"/>
    <property type="match status" value="1"/>
</dbReference>
<dbReference type="SUPFAM" id="SSF51735">
    <property type="entry name" value="NAD(P)-binding Rossmann-fold domains"/>
    <property type="match status" value="1"/>
</dbReference>
<sequence>MKIVVDENMPLAEALFAEFGEVVRVPGRTMTAEQLADADILLVRSVTKVNAALLSQATNLKFVGTATIGTDHIDKAVLAEKGINFTSAPGCNKVSVGEYIISALLVMAEKYQFSLSGLSLGVIGAGNTGTAVAERASALGIEVKLCDPLKEQAGDPRSFVSYDEALQCDLISFHVPLSREGEHATFHLLDKKYIQALRSEQILLNASRGEVWDNQAMLLRQQSAEPLLLVMDVWENEPDILHELVPYTDIATPHIAGYSLEGKYRGTYMLYEAFCQQFGYTVTKQLKQLLPVADINALTLNANTDEVVLKKLIHLVYDVRRDDARFRHQIGLPGRFDEMRKKYPERREWSSVTISSEQNNDELVKLGFSVSGN</sequence>
<evidence type="ECO:0000255" key="1">
    <source>
        <dbReference type="HAMAP-Rule" id="MF_01825"/>
    </source>
</evidence>
<gene>
    <name evidence="1" type="primary">pdxB</name>
    <name type="ordered locus">Tola_1572</name>
</gene>
<protein>
    <recommendedName>
        <fullName evidence="1">Erythronate-4-phosphate dehydrogenase</fullName>
        <ecNumber evidence="1">1.1.1.290</ecNumber>
    </recommendedName>
</protein>
<accession>C4LF16</accession>
<name>PDXB_TOLAT</name>
<comment type="function">
    <text evidence="1">Catalyzes the oxidation of erythronate-4-phosphate to 3-hydroxy-2-oxo-4-phosphonooxybutanoate.</text>
</comment>
<comment type="catalytic activity">
    <reaction evidence="1">
        <text>4-phospho-D-erythronate + NAD(+) = (R)-3-hydroxy-2-oxo-4-phosphooxybutanoate + NADH + H(+)</text>
        <dbReference type="Rhea" id="RHEA:18829"/>
        <dbReference type="ChEBI" id="CHEBI:15378"/>
        <dbReference type="ChEBI" id="CHEBI:57540"/>
        <dbReference type="ChEBI" id="CHEBI:57945"/>
        <dbReference type="ChEBI" id="CHEBI:58538"/>
        <dbReference type="ChEBI" id="CHEBI:58766"/>
        <dbReference type="EC" id="1.1.1.290"/>
    </reaction>
</comment>
<comment type="pathway">
    <text evidence="1">Cofactor biosynthesis; pyridoxine 5'-phosphate biosynthesis; pyridoxine 5'-phosphate from D-erythrose 4-phosphate: step 2/5.</text>
</comment>
<comment type="subunit">
    <text evidence="1">Homodimer.</text>
</comment>
<comment type="subcellular location">
    <subcellularLocation>
        <location evidence="1">Cytoplasm</location>
    </subcellularLocation>
</comment>
<comment type="similarity">
    <text evidence="1">Belongs to the D-isomer specific 2-hydroxyacid dehydrogenase family. PdxB subfamily.</text>
</comment>
<reference key="1">
    <citation type="submission" date="2009-05" db="EMBL/GenBank/DDBJ databases">
        <title>Complete sequence of Tolumonas auensis DSM 9187.</title>
        <authorList>
            <consortium name="US DOE Joint Genome Institute"/>
            <person name="Lucas S."/>
            <person name="Copeland A."/>
            <person name="Lapidus A."/>
            <person name="Glavina del Rio T."/>
            <person name="Tice H."/>
            <person name="Bruce D."/>
            <person name="Goodwin L."/>
            <person name="Pitluck S."/>
            <person name="Chertkov O."/>
            <person name="Brettin T."/>
            <person name="Detter J.C."/>
            <person name="Han C."/>
            <person name="Larimer F."/>
            <person name="Land M."/>
            <person name="Hauser L."/>
            <person name="Kyrpides N."/>
            <person name="Mikhailova N."/>
            <person name="Spring S."/>
            <person name="Beller H."/>
        </authorList>
    </citation>
    <scope>NUCLEOTIDE SEQUENCE [LARGE SCALE GENOMIC DNA]</scope>
    <source>
        <strain>DSM 9187 / NBRC 110442 / TA 4</strain>
    </source>
</reference>
<feature type="chain" id="PRO_1000216074" description="Erythronate-4-phosphate dehydrogenase">
    <location>
        <begin position="1"/>
        <end position="373"/>
    </location>
</feature>
<feature type="active site" evidence="1">
    <location>
        <position position="208"/>
    </location>
</feature>
<feature type="active site" evidence="1">
    <location>
        <position position="237"/>
    </location>
</feature>
<feature type="active site" description="Proton donor" evidence="1">
    <location>
        <position position="254"/>
    </location>
</feature>
<feature type="binding site" evidence="1">
    <location>
        <position position="45"/>
    </location>
    <ligand>
        <name>substrate</name>
    </ligand>
</feature>
<feature type="binding site" evidence="1">
    <location>
        <position position="67"/>
    </location>
    <ligand>
        <name>substrate</name>
    </ligand>
</feature>
<feature type="binding site" evidence="1">
    <location>
        <position position="147"/>
    </location>
    <ligand>
        <name>NAD(+)</name>
        <dbReference type="ChEBI" id="CHEBI:57540"/>
    </ligand>
</feature>
<feature type="binding site" evidence="1">
    <location>
        <begin position="206"/>
        <end position="208"/>
    </location>
    <ligand>
        <name>NAD(+)</name>
        <dbReference type="ChEBI" id="CHEBI:57540"/>
    </ligand>
</feature>
<feature type="binding site" evidence="1">
    <location>
        <position position="232"/>
    </location>
    <ligand>
        <name>NAD(+)</name>
        <dbReference type="ChEBI" id="CHEBI:57540"/>
    </ligand>
</feature>
<feature type="binding site" evidence="1">
    <location>
        <position position="257"/>
    </location>
    <ligand>
        <name>NAD(+)</name>
        <dbReference type="ChEBI" id="CHEBI:57540"/>
    </ligand>
</feature>
<feature type="binding site" evidence="1">
    <location>
        <position position="258"/>
    </location>
    <ligand>
        <name>substrate</name>
    </ligand>
</feature>
<keyword id="KW-0963">Cytoplasm</keyword>
<keyword id="KW-0520">NAD</keyword>
<keyword id="KW-0560">Oxidoreductase</keyword>
<keyword id="KW-0664">Pyridoxine biosynthesis</keyword>
<keyword id="KW-1185">Reference proteome</keyword>
<organism>
    <name type="scientific">Tolumonas auensis (strain DSM 9187 / NBRC 110442 / TA 4)</name>
    <dbReference type="NCBI Taxonomy" id="595494"/>
    <lineage>
        <taxon>Bacteria</taxon>
        <taxon>Pseudomonadati</taxon>
        <taxon>Pseudomonadota</taxon>
        <taxon>Gammaproteobacteria</taxon>
        <taxon>Aeromonadales</taxon>
        <taxon>Aeromonadaceae</taxon>
        <taxon>Tolumonas</taxon>
    </lineage>
</organism>
<proteinExistence type="inferred from homology"/>